<dbReference type="EC" id="3.1.21.4"/>
<dbReference type="EMBL" id="L77117">
    <property type="protein sequence ID" value="AAB99461.1"/>
    <property type="molecule type" value="Genomic_DNA"/>
</dbReference>
<dbReference type="PIR" id="H64480">
    <property type="entry name" value="H64480"/>
</dbReference>
<dbReference type="RefSeq" id="WP_010870969.1">
    <property type="nucleotide sequence ID" value="NC_000909.1"/>
</dbReference>
<dbReference type="FunCoup" id="Q58844">
    <property type="interactions" value="1"/>
</dbReference>
<dbReference type="STRING" id="243232.MJ_1449"/>
<dbReference type="REBASE" id="1222">
    <property type="entry name" value="MjaII"/>
</dbReference>
<dbReference type="PaxDb" id="243232-MJ_1449"/>
<dbReference type="EnsemblBacteria" id="AAB99461">
    <property type="protein sequence ID" value="AAB99461"/>
    <property type="gene ID" value="MJ_1449"/>
</dbReference>
<dbReference type="GeneID" id="1452353"/>
<dbReference type="KEGG" id="mja:MJ_1449"/>
<dbReference type="eggNOG" id="arCOG07628">
    <property type="taxonomic scope" value="Archaea"/>
</dbReference>
<dbReference type="HOGENOM" id="CLU_756000_0_0_2"/>
<dbReference type="InParanoid" id="Q58844"/>
<dbReference type="OrthoDB" id="64914at2157"/>
<dbReference type="PRO" id="PR:Q58844"/>
<dbReference type="Proteomes" id="UP000000805">
    <property type="component" value="Chromosome"/>
</dbReference>
<dbReference type="GO" id="GO:0003677">
    <property type="term" value="F:DNA binding"/>
    <property type="evidence" value="ECO:0007669"/>
    <property type="project" value="UniProtKB-KW"/>
</dbReference>
<dbReference type="GO" id="GO:0009036">
    <property type="term" value="F:type II site-specific deoxyribonuclease activity"/>
    <property type="evidence" value="ECO:0007669"/>
    <property type="project" value="UniProtKB-EC"/>
</dbReference>
<dbReference type="GO" id="GO:0009307">
    <property type="term" value="P:DNA restriction-modification system"/>
    <property type="evidence" value="ECO:0007669"/>
    <property type="project" value="UniProtKB-KW"/>
</dbReference>
<dbReference type="InterPro" id="IPR019045">
    <property type="entry name" value="Restrct_endonuc_II_TdeIII"/>
</dbReference>
<dbReference type="Pfam" id="PF09520">
    <property type="entry name" value="RE_TdeIII"/>
    <property type="match status" value="1"/>
</dbReference>
<organism>
    <name type="scientific">Methanocaldococcus jannaschii (strain ATCC 43067 / DSM 2661 / JAL-1 / JCM 10045 / NBRC 100440)</name>
    <name type="common">Methanococcus jannaschii</name>
    <dbReference type="NCBI Taxonomy" id="243232"/>
    <lineage>
        <taxon>Archaea</taxon>
        <taxon>Methanobacteriati</taxon>
        <taxon>Methanobacteriota</taxon>
        <taxon>Methanomada group</taxon>
        <taxon>Methanococci</taxon>
        <taxon>Methanococcales</taxon>
        <taxon>Methanocaldococcaceae</taxon>
        <taxon>Methanocaldococcus</taxon>
    </lineage>
</organism>
<evidence type="ECO:0000303" key="1">
    <source>
    </source>
</evidence>
<evidence type="ECO:0000305" key="2"/>
<reference key="1">
    <citation type="journal article" date="1996" name="Science">
        <title>Complete genome sequence of the methanogenic archaeon, Methanococcus jannaschii.</title>
        <authorList>
            <person name="Bult C.J."/>
            <person name="White O."/>
            <person name="Olsen G.J."/>
            <person name="Zhou L."/>
            <person name="Fleischmann R.D."/>
            <person name="Sutton G.G."/>
            <person name="Blake J.A."/>
            <person name="FitzGerald L.M."/>
            <person name="Clayton R.A."/>
            <person name="Gocayne J.D."/>
            <person name="Kerlavage A.R."/>
            <person name="Dougherty B.A."/>
            <person name="Tomb J.-F."/>
            <person name="Adams M.D."/>
            <person name="Reich C.I."/>
            <person name="Overbeek R."/>
            <person name="Kirkness E.F."/>
            <person name="Weinstock K.G."/>
            <person name="Merrick J.M."/>
            <person name="Glodek A."/>
            <person name="Scott J.L."/>
            <person name="Geoghagen N.S.M."/>
            <person name="Weidman J.F."/>
            <person name="Fuhrmann J.L."/>
            <person name="Nguyen D."/>
            <person name="Utterback T.R."/>
            <person name="Kelley J.M."/>
            <person name="Peterson J.D."/>
            <person name="Sadow P.W."/>
            <person name="Hanna M.C."/>
            <person name="Cotton M.D."/>
            <person name="Roberts K.M."/>
            <person name="Hurst M.A."/>
            <person name="Kaine B.P."/>
            <person name="Borodovsky M."/>
            <person name="Klenk H.-P."/>
            <person name="Fraser C.M."/>
            <person name="Smith H.O."/>
            <person name="Woese C.R."/>
            <person name="Venter J.C."/>
        </authorList>
    </citation>
    <scope>NUCLEOTIDE SEQUENCE [LARGE SCALE GENOMIC DNA]</scope>
    <source>
        <strain>ATCC 43067 / DSM 2661 / JAL-1 / JCM 10045 / NBRC 100440</strain>
    </source>
</reference>
<reference key="2">
    <citation type="patent" date="1999-03-11" number="WO9911821">
        <title>Method for screening restriction endonucleases.</title>
        <authorList>
            <person name="Noren C.J."/>
            <person name="Roberts R.J."/>
            <person name="Patti J."/>
            <person name="Byrd D.R."/>
            <person name="Morgan R.D."/>
        </authorList>
    </citation>
    <scope>CHARACTERIZATION</scope>
</reference>
<reference key="3">
    <citation type="journal article" date="2003" name="Nucleic Acids Res.">
        <title>A nomenclature for restriction enzymes, DNA methyltransferases, homing endonucleases and their genes.</title>
        <authorList>
            <person name="Roberts R.J."/>
            <person name="Belfort M."/>
            <person name="Bestor T."/>
            <person name="Bhagwat A.S."/>
            <person name="Bickle T.A."/>
            <person name="Bitinaite J."/>
            <person name="Blumenthal R.M."/>
            <person name="Degtyarev S.K."/>
            <person name="Dryden D.T."/>
            <person name="Dybvig K."/>
            <person name="Firman K."/>
            <person name="Gromova E.S."/>
            <person name="Gumport R.I."/>
            <person name="Halford S.E."/>
            <person name="Hattman S."/>
            <person name="Heitman J."/>
            <person name="Hornby D.P."/>
            <person name="Janulaitis A."/>
            <person name="Jeltsch A."/>
            <person name="Josephsen J."/>
            <person name="Kiss A."/>
            <person name="Klaenhammer T.R."/>
            <person name="Kobayashi I."/>
            <person name="Kong H."/>
            <person name="Krueger D.H."/>
            <person name="Lacks S."/>
            <person name="Marinus M.G."/>
            <person name="Miyahara M."/>
            <person name="Morgan R.D."/>
            <person name="Murray N.E."/>
            <person name="Nagaraja V."/>
            <person name="Piekarowicz A."/>
            <person name="Pingoud A."/>
            <person name="Raleigh E."/>
            <person name="Rao D.N."/>
            <person name="Reich N."/>
            <person name="Repin V.E."/>
            <person name="Selker E.U."/>
            <person name="Shaw P.C."/>
            <person name="Stein D.C."/>
            <person name="Stoddard B.L."/>
            <person name="Szybalski W."/>
            <person name="Trautner T.A."/>
            <person name="Van Etten J.L."/>
            <person name="Vitor J.M."/>
            <person name="Wilson G.G."/>
            <person name="Xu S.Y."/>
        </authorList>
    </citation>
    <scope>NOMENCLATURE</scope>
    <scope>SUBTYPE</scope>
</reference>
<gene>
    <name type="primary">mjaIIR</name>
    <name type="ordered locus">MJ1449</name>
</gene>
<proteinExistence type="evidence at protein level"/>
<accession>Q58844</accession>
<keyword id="KW-0238">DNA-binding</keyword>
<keyword id="KW-0255">Endonuclease</keyword>
<keyword id="KW-0378">Hydrolase</keyword>
<keyword id="KW-0540">Nuclease</keyword>
<keyword id="KW-1185">Reference proteome</keyword>
<keyword id="KW-0680">Restriction system</keyword>
<protein>
    <recommendedName>
        <fullName evidence="1">Type II restriction enzyme MjaII</fullName>
        <shortName>R.MjaII</shortName>
        <ecNumber>3.1.21.4</ecNumber>
    </recommendedName>
    <alternativeName>
        <fullName>Endonuclease MjaII</fullName>
    </alternativeName>
    <alternativeName>
        <fullName>Type-2 restriction enzyme MjaII</fullName>
    </alternativeName>
</protein>
<feature type="chain" id="PRO_0000077333" description="Type II restriction enzyme MjaII">
    <location>
        <begin position="1"/>
        <end position="370"/>
    </location>
</feature>
<name>T2M2_METJA</name>
<sequence>MPLSKNVIEKISIETIRVLKSRFDTISDEDIKIRNMPFHMAFLRAFYGKIGINDDTEALKFLTLSQWFHGLSTTLGQSYFENIAHILSNGEKRTFKNYKIKRSVRDKISEIINDLKSGERLPNVEKENKELREATSKNSEYVNGLEFTADVYFEDKDKVVMIELKTVRPNAGEMRGEKQKILYGKAYMMETKPNKKVYYFIGFPYDPTENPENPCGYDKDRFMSSLIEFSKYFDKREVLIAEELWSFLSGEENTMKKILDIINSIAKPDFKEKFDFINTFPFINQDRLYTKDAIDEQKFKKYMDILQEWRLYSEIECAKAVKELSLLKLSSRDRRTFERLINNSMFSNNNKYNENRKMKILELYNKYMQK</sequence>
<comment type="function">
    <text evidence="1">A P subtype restriction enzyme that recognizes the double-stranded sequence 5'-GGNCC-3'; the cleavage site is unknown.</text>
</comment>
<comment type="catalytic activity">
    <reaction>
        <text>Endonucleolytic cleavage of DNA to give specific double-stranded fragments with terminal 5'-phosphates.</text>
        <dbReference type="EC" id="3.1.21.4"/>
    </reaction>
</comment>
<comment type="similarity">
    <text evidence="2">Belongs to the TdeIII type II restriction endonuclease family.</text>
</comment>